<sequence length="142" mass="15191">MVLSAADKSNVKAAWGKVGSNAGAYGAEALERMFLSFPTTKTYFPHFDLSHGSAQVKGHGEKVAAALTKAVGHLDDLPGTLSDLSDLHAHKLRVDPVNFKLLSHSLLVTLACHHPSDFTPAVHASLDKFLANVSTVLTSKYR</sequence>
<dbReference type="EMBL" id="J00044">
    <property type="protein sequence ID" value="AAA30910.1"/>
    <property type="molecule type" value="Genomic_DNA"/>
</dbReference>
<dbReference type="PIR" id="B92379">
    <property type="entry name" value="HAGT2"/>
</dbReference>
<dbReference type="SMR" id="P0CH26"/>
<dbReference type="STRING" id="9925.ENSCHIP00000020926"/>
<dbReference type="Proteomes" id="UP000291000">
    <property type="component" value="Unassembled WGS sequence"/>
</dbReference>
<dbReference type="Proteomes" id="UP000694566">
    <property type="component" value="Unplaced"/>
</dbReference>
<dbReference type="GO" id="GO:0072562">
    <property type="term" value="C:blood microparticle"/>
    <property type="evidence" value="ECO:0007669"/>
    <property type="project" value="TreeGrafter"/>
</dbReference>
<dbReference type="GO" id="GO:0031838">
    <property type="term" value="C:haptoglobin-hemoglobin complex"/>
    <property type="evidence" value="ECO:0007669"/>
    <property type="project" value="TreeGrafter"/>
</dbReference>
<dbReference type="GO" id="GO:0005833">
    <property type="term" value="C:hemoglobin complex"/>
    <property type="evidence" value="ECO:0007669"/>
    <property type="project" value="InterPro"/>
</dbReference>
<dbReference type="GO" id="GO:0031720">
    <property type="term" value="F:haptoglobin binding"/>
    <property type="evidence" value="ECO:0007669"/>
    <property type="project" value="TreeGrafter"/>
</dbReference>
<dbReference type="GO" id="GO:0020037">
    <property type="term" value="F:heme binding"/>
    <property type="evidence" value="ECO:0007669"/>
    <property type="project" value="InterPro"/>
</dbReference>
<dbReference type="GO" id="GO:0005506">
    <property type="term" value="F:iron ion binding"/>
    <property type="evidence" value="ECO:0007669"/>
    <property type="project" value="InterPro"/>
</dbReference>
<dbReference type="GO" id="GO:0043177">
    <property type="term" value="F:organic acid binding"/>
    <property type="evidence" value="ECO:0007669"/>
    <property type="project" value="TreeGrafter"/>
</dbReference>
<dbReference type="GO" id="GO:0019825">
    <property type="term" value="F:oxygen binding"/>
    <property type="evidence" value="ECO:0007669"/>
    <property type="project" value="InterPro"/>
</dbReference>
<dbReference type="GO" id="GO:0005344">
    <property type="term" value="F:oxygen carrier activity"/>
    <property type="evidence" value="ECO:0007669"/>
    <property type="project" value="UniProtKB-KW"/>
</dbReference>
<dbReference type="GO" id="GO:0004601">
    <property type="term" value="F:peroxidase activity"/>
    <property type="evidence" value="ECO:0007669"/>
    <property type="project" value="TreeGrafter"/>
</dbReference>
<dbReference type="GO" id="GO:0042744">
    <property type="term" value="P:hydrogen peroxide catabolic process"/>
    <property type="evidence" value="ECO:0007669"/>
    <property type="project" value="TreeGrafter"/>
</dbReference>
<dbReference type="CDD" id="cd08927">
    <property type="entry name" value="Hb-alpha-like"/>
    <property type="match status" value="1"/>
</dbReference>
<dbReference type="FunFam" id="1.10.490.10:FF:000002">
    <property type="entry name" value="Hemoglobin subunit alpha"/>
    <property type="match status" value="1"/>
</dbReference>
<dbReference type="Gene3D" id="1.10.490.10">
    <property type="entry name" value="Globins"/>
    <property type="match status" value="1"/>
</dbReference>
<dbReference type="InterPro" id="IPR000971">
    <property type="entry name" value="Globin"/>
</dbReference>
<dbReference type="InterPro" id="IPR009050">
    <property type="entry name" value="Globin-like_sf"/>
</dbReference>
<dbReference type="InterPro" id="IPR012292">
    <property type="entry name" value="Globin/Proto"/>
</dbReference>
<dbReference type="InterPro" id="IPR002338">
    <property type="entry name" value="Hemoglobin_a-typ"/>
</dbReference>
<dbReference type="InterPro" id="IPR050056">
    <property type="entry name" value="Hemoglobin_oxygen_transport"/>
</dbReference>
<dbReference type="InterPro" id="IPR002339">
    <property type="entry name" value="Hemoglobin_pi"/>
</dbReference>
<dbReference type="PANTHER" id="PTHR11442">
    <property type="entry name" value="HEMOGLOBIN FAMILY MEMBER"/>
    <property type="match status" value="1"/>
</dbReference>
<dbReference type="PANTHER" id="PTHR11442:SF48">
    <property type="entry name" value="HEMOGLOBIN SUBUNIT ALPHA"/>
    <property type="match status" value="1"/>
</dbReference>
<dbReference type="Pfam" id="PF00042">
    <property type="entry name" value="Globin"/>
    <property type="match status" value="1"/>
</dbReference>
<dbReference type="PRINTS" id="PR00612">
    <property type="entry name" value="ALPHAHAEM"/>
</dbReference>
<dbReference type="PRINTS" id="PR00815">
    <property type="entry name" value="PIHAEM"/>
</dbReference>
<dbReference type="SUPFAM" id="SSF46458">
    <property type="entry name" value="Globin-like"/>
    <property type="match status" value="1"/>
</dbReference>
<dbReference type="PROSITE" id="PS01033">
    <property type="entry name" value="GLOBIN"/>
    <property type="match status" value="1"/>
</dbReference>
<organism>
    <name type="scientific">Capra hircus</name>
    <name type="common">Goat</name>
    <dbReference type="NCBI Taxonomy" id="9925"/>
    <lineage>
        <taxon>Eukaryota</taxon>
        <taxon>Metazoa</taxon>
        <taxon>Chordata</taxon>
        <taxon>Craniata</taxon>
        <taxon>Vertebrata</taxon>
        <taxon>Euteleostomi</taxon>
        <taxon>Mammalia</taxon>
        <taxon>Eutheria</taxon>
        <taxon>Laurasiatheria</taxon>
        <taxon>Artiodactyla</taxon>
        <taxon>Ruminantia</taxon>
        <taxon>Pecora</taxon>
        <taxon>Bovidae</taxon>
        <taxon>Caprinae</taxon>
        <taxon>Capra</taxon>
    </lineage>
</organism>
<feature type="initiator methionine" description="Removed" evidence="4">
    <location>
        <position position="1"/>
    </location>
</feature>
<feature type="chain" id="PRO_0000396128" description="Hemoglobin subunit alpha-2">
    <location>
        <begin position="2"/>
        <end position="142"/>
    </location>
</feature>
<feature type="peptide" id="PRO_0000455850" description="Hemopressin" evidence="2">
    <location>
        <begin position="96"/>
        <end position="104"/>
    </location>
</feature>
<feature type="domain" description="Globin" evidence="3">
    <location>
        <begin position="2"/>
        <end position="142"/>
    </location>
</feature>
<feature type="binding site" evidence="3">
    <location>
        <position position="59"/>
    </location>
    <ligand>
        <name>O2</name>
        <dbReference type="ChEBI" id="CHEBI:15379"/>
    </ligand>
</feature>
<feature type="binding site" description="proximal binding residue" evidence="3">
    <location>
        <position position="88"/>
    </location>
    <ligand>
        <name>heme b</name>
        <dbReference type="ChEBI" id="CHEBI:60344"/>
    </ligand>
    <ligandPart>
        <name>Fe</name>
        <dbReference type="ChEBI" id="CHEBI:18248"/>
    </ligandPart>
</feature>
<comment type="function">
    <text evidence="1">Involved in oxygen transport from the lung to the various peripheral tissues.</text>
</comment>
<comment type="function">
    <molecule>Hemopressin</molecule>
    <text evidence="2">Hemopressin acts as an antagonist peptide of the cannabinoid receptor CNR1. Hemopressin-binding efficiently blocks cannabinoid receptor CNR1 and subsequent signaling.</text>
</comment>
<comment type="subunit">
    <text evidence="1">Heterotetramer of two alpha chains and two beta chains.</text>
</comment>
<comment type="miscellaneous">
    <text>Adult goat and other mammalian species produce unequal amounts of alpha-globin from non-allelic loci.</text>
</comment>
<comment type="similarity">
    <text evidence="3">Belongs to the globin family.</text>
</comment>
<evidence type="ECO:0000250" key="1"/>
<evidence type="ECO:0000250" key="2">
    <source>
        <dbReference type="UniProtKB" id="P01946"/>
    </source>
</evidence>
<evidence type="ECO:0000255" key="3">
    <source>
        <dbReference type="PROSITE-ProRule" id="PRU00238"/>
    </source>
</evidence>
<evidence type="ECO:0000269" key="4">
    <source>
    </source>
</evidence>
<reference key="1">
    <citation type="journal article" date="1982" name="J. Biol. Chem.">
        <title>Gene conversion of two functional goat alpha-globin genes preserves only minimal flanking sequences.</title>
        <authorList>
            <person name="Schon E.A."/>
            <person name="Wernke S.M."/>
            <person name="Lingrel J.B."/>
        </authorList>
    </citation>
    <scope>NUCLEOTIDE SEQUENCE [GENOMIC DNA]</scope>
</reference>
<reference key="2">
    <citation type="journal article" date="1968" name="J. Biol. Chem.">
        <title>The structure of goat hemoglobins. II. Structural studies of the alpha chains of the hemoglobins A and B.</title>
        <authorList>
            <person name="Huisman T.H.J."/>
            <person name="Brandt G."/>
            <person name="Wilson J.B."/>
        </authorList>
    </citation>
    <scope>PARTIAL PROTEIN SEQUENCE</scope>
    <scope>CLEAVAGE OF INITIATOR METHIONINE</scope>
</reference>
<accession>P0CH26</accession>
<accession>P01970</accession>
<accession>P68238</accession>
<keyword id="KW-0903">Direct protein sequencing</keyword>
<keyword id="KW-0349">Heme</keyword>
<keyword id="KW-0408">Iron</keyword>
<keyword id="KW-0479">Metal-binding</keyword>
<keyword id="KW-0561">Oxygen transport</keyword>
<keyword id="KW-1185">Reference proteome</keyword>
<keyword id="KW-0813">Transport</keyword>
<name>HBA2_CAPHI</name>
<proteinExistence type="evidence at protein level"/>
<protein>
    <recommendedName>
        <fullName>Hemoglobin subunit alpha-2</fullName>
    </recommendedName>
    <alternativeName>
        <fullName>Alpha-2-globin</fullName>
    </alternativeName>
    <alternativeName>
        <fullName>Hemoglobin alpha-2 chain</fullName>
    </alternativeName>
    <component>
        <recommendedName>
            <fullName evidence="2">Hemopressin</fullName>
        </recommendedName>
    </component>
</protein>
<gene>
    <name type="primary">HBA2</name>
</gene>